<reference key="1">
    <citation type="journal article" date="2003" name="Nature">
        <title>The genome of a motile marine Synechococcus.</title>
        <authorList>
            <person name="Palenik B."/>
            <person name="Brahamsha B."/>
            <person name="Larimer F.W."/>
            <person name="Land M.L."/>
            <person name="Hauser L."/>
            <person name="Chain P."/>
            <person name="Lamerdin J.E."/>
            <person name="Regala W."/>
            <person name="Allen E.E."/>
            <person name="McCarren J."/>
            <person name="Paulsen I.T."/>
            <person name="Dufresne A."/>
            <person name="Partensky F."/>
            <person name="Webb E.A."/>
            <person name="Waterbury J."/>
        </authorList>
    </citation>
    <scope>NUCLEOTIDE SEQUENCE [LARGE SCALE GENOMIC DNA]</scope>
    <source>
        <strain>WH8102</strain>
    </source>
</reference>
<reference key="2">
    <citation type="journal article" date="2019" name="Front. Microbiol.">
        <title>Proteomic Response to Rising Temperature in the Marine Cyanobacterium Synechococcus Grown in Different Nitrogen Sources.</title>
        <authorList>
            <person name="Li Y.Y."/>
            <person name="Chen X.H."/>
            <person name="Xue C."/>
            <person name="Zhang H."/>
            <person name="Sun G."/>
            <person name="Xie Z.X."/>
            <person name="Lin L."/>
            <person name="Wang D.Z."/>
        </authorList>
    </citation>
    <scope>IDENTIFICATION BY MASS SPECTROMETRY</scope>
    <source>
        <strain>WH8102</strain>
    </source>
</reference>
<protein>
    <recommendedName>
        <fullName evidence="3">Carboxysome shell protein CsoS1</fullName>
    </recommendedName>
</protein>
<feature type="chain" id="PRO_0000201504" description="Carboxysome shell protein CsoS1">
    <location>
        <begin position="1"/>
        <end position="103"/>
    </location>
</feature>
<feature type="domain" description="BMC" evidence="2">
    <location>
        <begin position="9"/>
        <end position="94"/>
    </location>
</feature>
<proteinExistence type="evidence at protein level"/>
<accession>P0A329</accession>
<accession>P96485</accession>
<evidence type="ECO:0000250" key="1">
    <source>
        <dbReference type="UniProtKB" id="P45689"/>
    </source>
</evidence>
<evidence type="ECO:0000255" key="2">
    <source>
        <dbReference type="PROSITE-ProRule" id="PRU01278"/>
    </source>
</evidence>
<evidence type="ECO:0000305" key="3"/>
<sequence>MANETMGIALGMIETRGLVPAIEAADAMTKAAEVRLIGREFVGGGYVTVLVRGETGAVNAAVRAGADACERVGDGLVAAHIIARPHREVEPALGNGNFLGQKD</sequence>
<comment type="function">
    <text evidence="1">One of shell proteins of the carboxysome, a polyhedral inclusion where RuBisCO (ribulose bisphosphate carboxylase, ccbL-ccbS) is sequestered. Assembles into hexamers which make sheets that form the facets of the polyhedral carboxysome.</text>
</comment>
<comment type="subunit">
    <text evidence="1">Homohexamer with a small central pore. Forms a CsoS2-CsoS1-RuBisCO complex.</text>
</comment>
<comment type="subcellular location">
    <subcellularLocation>
        <location evidence="1">Carboxysome</location>
    </subcellularLocation>
    <text evidence="3">This bacterium makes alpha-type carboxysomes.</text>
</comment>
<comment type="domain">
    <text evidence="1">The tight homohexamer forms a small pore which is positively charged.</text>
</comment>
<comment type="similarity">
    <text evidence="3">Belongs to the bacterial microcompartments protein family. CsoS1 subfamily.</text>
</comment>
<dbReference type="EMBL" id="BX569693">
    <property type="protein sequence ID" value="CAE08234.1"/>
    <property type="molecule type" value="Genomic_DNA"/>
</dbReference>
<dbReference type="RefSeq" id="WP_006169870.1">
    <property type="nucleotide sequence ID" value="NC_005070.1"/>
</dbReference>
<dbReference type="SMR" id="P0A329"/>
<dbReference type="STRING" id="84588.SYNW1719"/>
<dbReference type="KEGG" id="syw:SYNW1719"/>
<dbReference type="eggNOG" id="COG4577">
    <property type="taxonomic scope" value="Bacteria"/>
</dbReference>
<dbReference type="HOGENOM" id="CLU_064903_5_3_3"/>
<dbReference type="Proteomes" id="UP000001422">
    <property type="component" value="Chromosome"/>
</dbReference>
<dbReference type="GO" id="GO:0031470">
    <property type="term" value="C:carboxysome"/>
    <property type="evidence" value="ECO:0007669"/>
    <property type="project" value="UniProtKB-SubCell"/>
</dbReference>
<dbReference type="GO" id="GO:0043886">
    <property type="term" value="F:structural constituent of carboxysome shell"/>
    <property type="evidence" value="ECO:0007669"/>
    <property type="project" value="UniProtKB-ARBA"/>
</dbReference>
<dbReference type="GO" id="GO:0015977">
    <property type="term" value="P:carbon fixation"/>
    <property type="evidence" value="ECO:0007669"/>
    <property type="project" value="UniProtKB-KW"/>
</dbReference>
<dbReference type="GO" id="GO:0015979">
    <property type="term" value="P:photosynthesis"/>
    <property type="evidence" value="ECO:0007669"/>
    <property type="project" value="UniProtKB-KW"/>
</dbReference>
<dbReference type="CDD" id="cd07058">
    <property type="entry name" value="BMC_CsoS1"/>
    <property type="match status" value="1"/>
</dbReference>
<dbReference type="Gene3D" id="3.30.70.1710">
    <property type="match status" value="1"/>
</dbReference>
<dbReference type="InterPro" id="IPR020808">
    <property type="entry name" value="Bact_microcomp_CS"/>
</dbReference>
<dbReference type="InterPro" id="IPR000249">
    <property type="entry name" value="BMC_dom"/>
</dbReference>
<dbReference type="InterPro" id="IPR050575">
    <property type="entry name" value="BMC_shell"/>
</dbReference>
<dbReference type="InterPro" id="IPR037233">
    <property type="entry name" value="CcmK-like_sf"/>
</dbReference>
<dbReference type="InterPro" id="IPR044872">
    <property type="entry name" value="CcmK/CsoS1_BMC"/>
</dbReference>
<dbReference type="PANTHER" id="PTHR33941:SF11">
    <property type="entry name" value="BACTERIAL MICROCOMPARTMENT SHELL PROTEIN PDUJ"/>
    <property type="match status" value="1"/>
</dbReference>
<dbReference type="PANTHER" id="PTHR33941">
    <property type="entry name" value="PROPANEDIOL UTILIZATION PROTEIN PDUA"/>
    <property type="match status" value="1"/>
</dbReference>
<dbReference type="Pfam" id="PF00936">
    <property type="entry name" value="BMC"/>
    <property type="match status" value="1"/>
</dbReference>
<dbReference type="SMART" id="SM00877">
    <property type="entry name" value="BMC"/>
    <property type="match status" value="1"/>
</dbReference>
<dbReference type="SUPFAM" id="SSF143414">
    <property type="entry name" value="CcmK-like"/>
    <property type="match status" value="1"/>
</dbReference>
<dbReference type="PROSITE" id="PS01139">
    <property type="entry name" value="BMC_1"/>
    <property type="match status" value="1"/>
</dbReference>
<dbReference type="PROSITE" id="PS51930">
    <property type="entry name" value="BMC_2"/>
    <property type="match status" value="1"/>
</dbReference>
<keyword id="KW-1283">Bacterial microcompartment</keyword>
<keyword id="KW-0120">Carbon dioxide fixation</keyword>
<keyword id="KW-1282">Carboxysome</keyword>
<keyword id="KW-0602">Photosynthesis</keyword>
<gene>
    <name type="primary">csoS1</name>
    <name type="ordered locus">SYNW1719</name>
</gene>
<organism>
    <name type="scientific">Parasynechococcus marenigrum (strain WH8102)</name>
    <dbReference type="NCBI Taxonomy" id="84588"/>
    <lineage>
        <taxon>Bacteria</taxon>
        <taxon>Bacillati</taxon>
        <taxon>Cyanobacteriota</taxon>
        <taxon>Cyanophyceae</taxon>
        <taxon>Synechococcales</taxon>
        <taxon>Prochlorococcaceae</taxon>
        <taxon>Parasynechococcus</taxon>
        <taxon>Parasynechococcus marenigrum</taxon>
    </lineage>
</organism>
<name>CSOS1_PARMW</name>